<comment type="function">
    <text evidence="1">DNA-dependent RNA polymerase (RNAP) catalyzes the transcription of DNA into RNA using the four ribonucleoside triphosphates as substrates.</text>
</comment>
<comment type="catalytic activity">
    <reaction evidence="1">
        <text>RNA(n) + a ribonucleoside 5'-triphosphate = RNA(n+1) + diphosphate</text>
        <dbReference type="Rhea" id="RHEA:21248"/>
        <dbReference type="Rhea" id="RHEA-COMP:14527"/>
        <dbReference type="Rhea" id="RHEA-COMP:17342"/>
        <dbReference type="ChEBI" id="CHEBI:33019"/>
        <dbReference type="ChEBI" id="CHEBI:61557"/>
        <dbReference type="ChEBI" id="CHEBI:140395"/>
        <dbReference type="EC" id="2.7.7.6"/>
    </reaction>
</comment>
<comment type="cofactor">
    <cofactor evidence="1">
        <name>Zn(2+)</name>
        <dbReference type="ChEBI" id="CHEBI:29105"/>
    </cofactor>
    <text evidence="1">Binds 1 zinc ion.</text>
</comment>
<comment type="subunit">
    <text evidence="1">Part of the RNA polymerase complex.</text>
</comment>
<comment type="subcellular location">
    <subcellularLocation>
        <location evidence="1">Cytoplasm</location>
    </subcellularLocation>
</comment>
<comment type="similarity">
    <text evidence="1">Belongs to the archaeal Rpo10/eukaryotic RPB10 RNA polymerase subunit family.</text>
</comment>
<gene>
    <name evidence="1" type="primary">rpo10</name>
    <name evidence="1" type="synonym">rpoN</name>
    <name type="ordered locus">Hbut_0534</name>
</gene>
<name>RPO10_HYPBU</name>
<organism>
    <name type="scientific">Hyperthermus butylicus (strain DSM 5456 / JCM 9403 / PLM1-5)</name>
    <dbReference type="NCBI Taxonomy" id="415426"/>
    <lineage>
        <taxon>Archaea</taxon>
        <taxon>Thermoproteota</taxon>
        <taxon>Thermoprotei</taxon>
        <taxon>Desulfurococcales</taxon>
        <taxon>Pyrodictiaceae</taxon>
        <taxon>Hyperthermus</taxon>
    </lineage>
</organism>
<feature type="chain" id="PRO_0000304190" description="DNA-directed RNA polymerase subunit Rpo10">
    <location>
        <begin position="1"/>
        <end position="66"/>
    </location>
</feature>
<feature type="binding site" evidence="1">
    <location>
        <position position="7"/>
    </location>
    <ligand>
        <name>Zn(2+)</name>
        <dbReference type="ChEBI" id="CHEBI:29105"/>
    </ligand>
</feature>
<feature type="binding site" evidence="1">
    <location>
        <position position="10"/>
    </location>
    <ligand>
        <name>Zn(2+)</name>
        <dbReference type="ChEBI" id="CHEBI:29105"/>
    </ligand>
</feature>
<feature type="binding site" evidence="1">
    <location>
        <position position="44"/>
    </location>
    <ligand>
        <name>Zn(2+)</name>
        <dbReference type="ChEBI" id="CHEBI:29105"/>
    </ligand>
</feature>
<feature type="binding site" evidence="1">
    <location>
        <position position="45"/>
    </location>
    <ligand>
        <name>Zn(2+)</name>
        <dbReference type="ChEBI" id="CHEBI:29105"/>
    </ligand>
</feature>
<protein>
    <recommendedName>
        <fullName evidence="1">DNA-directed RNA polymerase subunit Rpo10</fullName>
        <ecNumber evidence="1">2.7.7.6</ecNumber>
    </recommendedName>
    <alternativeName>
        <fullName evidence="1">DNA-directed RNA polymerase subunit N</fullName>
    </alternativeName>
</protein>
<dbReference type="EC" id="2.7.7.6" evidence="1"/>
<dbReference type="EMBL" id="CP000493">
    <property type="protein sequence ID" value="ABM80394.1"/>
    <property type="molecule type" value="Genomic_DNA"/>
</dbReference>
<dbReference type="RefSeq" id="WP_011821712.1">
    <property type="nucleotide sequence ID" value="NC_008818.1"/>
</dbReference>
<dbReference type="SMR" id="A2BK83"/>
<dbReference type="STRING" id="415426.Hbut_0534"/>
<dbReference type="EnsemblBacteria" id="ABM80394">
    <property type="protein sequence ID" value="ABM80394"/>
    <property type="gene ID" value="Hbut_0534"/>
</dbReference>
<dbReference type="GeneID" id="4782386"/>
<dbReference type="KEGG" id="hbu:Hbut_0534"/>
<dbReference type="eggNOG" id="arCOG04244">
    <property type="taxonomic scope" value="Archaea"/>
</dbReference>
<dbReference type="HOGENOM" id="CLU_143122_1_1_2"/>
<dbReference type="OrthoDB" id="371754at2157"/>
<dbReference type="Proteomes" id="UP000002593">
    <property type="component" value="Chromosome"/>
</dbReference>
<dbReference type="GO" id="GO:0005737">
    <property type="term" value="C:cytoplasm"/>
    <property type="evidence" value="ECO:0007669"/>
    <property type="project" value="UniProtKB-SubCell"/>
</dbReference>
<dbReference type="GO" id="GO:0000428">
    <property type="term" value="C:DNA-directed RNA polymerase complex"/>
    <property type="evidence" value="ECO:0007669"/>
    <property type="project" value="UniProtKB-KW"/>
</dbReference>
<dbReference type="GO" id="GO:0003677">
    <property type="term" value="F:DNA binding"/>
    <property type="evidence" value="ECO:0007669"/>
    <property type="project" value="InterPro"/>
</dbReference>
<dbReference type="GO" id="GO:0003899">
    <property type="term" value="F:DNA-directed RNA polymerase activity"/>
    <property type="evidence" value="ECO:0007669"/>
    <property type="project" value="UniProtKB-UniRule"/>
</dbReference>
<dbReference type="GO" id="GO:0008270">
    <property type="term" value="F:zinc ion binding"/>
    <property type="evidence" value="ECO:0007669"/>
    <property type="project" value="UniProtKB-UniRule"/>
</dbReference>
<dbReference type="GO" id="GO:0006351">
    <property type="term" value="P:DNA-templated transcription"/>
    <property type="evidence" value="ECO:0007669"/>
    <property type="project" value="UniProtKB-UniRule"/>
</dbReference>
<dbReference type="Gene3D" id="1.10.10.60">
    <property type="entry name" value="Homeodomain-like"/>
    <property type="match status" value="1"/>
</dbReference>
<dbReference type="HAMAP" id="MF_00250">
    <property type="entry name" value="RNApol_arch_Rpo10"/>
    <property type="match status" value="1"/>
</dbReference>
<dbReference type="InterPro" id="IPR023580">
    <property type="entry name" value="RNA_pol_su_RPB10"/>
</dbReference>
<dbReference type="InterPro" id="IPR020789">
    <property type="entry name" value="RNA_pol_suN_Zn-BS"/>
</dbReference>
<dbReference type="InterPro" id="IPR000268">
    <property type="entry name" value="RPABC5/Rpb10"/>
</dbReference>
<dbReference type="NCBIfam" id="NF003089">
    <property type="entry name" value="PRK04016.1"/>
    <property type="match status" value="1"/>
</dbReference>
<dbReference type="PANTHER" id="PTHR23431:SF3">
    <property type="entry name" value="DNA-DIRECTED RNA POLYMERASES I, II, AND III SUBUNIT RPABC5"/>
    <property type="match status" value="1"/>
</dbReference>
<dbReference type="PANTHER" id="PTHR23431">
    <property type="entry name" value="DNA-DIRECTED RNA POLYMERASES I, II, AND III SUBUNIT RPABC5 FAMILY MEMBER"/>
    <property type="match status" value="1"/>
</dbReference>
<dbReference type="Pfam" id="PF01194">
    <property type="entry name" value="RNA_pol_N"/>
    <property type="match status" value="1"/>
</dbReference>
<dbReference type="PIRSF" id="PIRSF005653">
    <property type="entry name" value="RNA_pol_N/8_sub"/>
    <property type="match status" value="1"/>
</dbReference>
<dbReference type="SUPFAM" id="SSF46924">
    <property type="entry name" value="RNA polymerase subunit RPB10"/>
    <property type="match status" value="1"/>
</dbReference>
<dbReference type="PROSITE" id="PS01112">
    <property type="entry name" value="RNA_POL_N_8KD"/>
    <property type="match status" value="1"/>
</dbReference>
<keyword id="KW-0963">Cytoplasm</keyword>
<keyword id="KW-0240">DNA-directed RNA polymerase</keyword>
<keyword id="KW-0479">Metal-binding</keyword>
<keyword id="KW-0548">Nucleotidyltransferase</keyword>
<keyword id="KW-1185">Reference proteome</keyword>
<keyword id="KW-0804">Transcription</keyword>
<keyword id="KW-0808">Transferase</keyword>
<keyword id="KW-0862">Zinc</keyword>
<reference key="1">
    <citation type="journal article" date="2007" name="Archaea">
        <title>The genome of Hyperthermus butylicus: a sulfur-reducing, peptide fermenting, neutrophilic Crenarchaeote growing up to 108 degrees C.</title>
        <authorList>
            <person name="Bruegger K."/>
            <person name="Chen L."/>
            <person name="Stark M."/>
            <person name="Zibat A."/>
            <person name="Redder P."/>
            <person name="Ruepp A."/>
            <person name="Awayez M."/>
            <person name="She Q."/>
            <person name="Garrett R.A."/>
            <person name="Klenk H.-P."/>
        </authorList>
    </citation>
    <scope>NUCLEOTIDE SEQUENCE [LARGE SCALE GENOMIC DNA]</scope>
    <source>
        <strain>DSM 5456 / JCM 9403 / PLM1-5</strain>
    </source>
</reference>
<evidence type="ECO:0000255" key="1">
    <source>
        <dbReference type="HAMAP-Rule" id="MF_00250"/>
    </source>
</evidence>
<proteinExistence type="inferred from homology"/>
<accession>A2BK83</accession>
<sequence length="66" mass="7859">MIIPMRCFTCGRPLAQYWEEFRSRVEGGEDPRKVLDELGVKRYCCRKTLLAHVPAIYEVRKFKRVL</sequence>